<gene>
    <name type="primary">CRYGS</name>
</gene>
<evidence type="ECO:0000250" key="1"/>
<evidence type="ECO:0000250" key="2">
    <source>
        <dbReference type="UniProtKB" id="P22914"/>
    </source>
</evidence>
<evidence type="ECO:0000255" key="3">
    <source>
        <dbReference type="PROSITE-ProRule" id="PRU00028"/>
    </source>
</evidence>
<evidence type="ECO:0000305" key="4"/>
<name>CRYGS_CANLF</name>
<sequence length="178" mass="21037">MSKSGTKITFYEDKHFQGRHYDCDCDCADFHMYLSRCNSIRVEGGTWAVYERPNFAGYMYILPRGEYPEYQHWMGLNDRLSSCRAVHLSSGGQYKIQIFEKGDFNGQMYETTEDCPSIMEQFHMREVHSSKVLDGVWIFYELPNYRGRQYLLDKKEYRKPIDWGAASPAVQSFRRIVE</sequence>
<proteinExistence type="evidence at transcript level"/>
<reference key="1">
    <citation type="submission" date="2006-12" db="EMBL/GenBank/DDBJ databases">
        <authorList>
            <person name="Wistow G."/>
        </authorList>
    </citation>
    <scope>NUCLEOTIDE SEQUENCE [MRNA]</scope>
    <source>
        <tissue>Lens</tissue>
    </source>
</reference>
<comment type="function">
    <text evidence="1">Crystallins are the dominant structural components of the vertebrate eye lens.</text>
</comment>
<comment type="subunit">
    <text evidence="1">Monomer.</text>
</comment>
<comment type="domain">
    <text>Has a two-domain beta-structure, folded into four very similar Greek key motifs.</text>
</comment>
<comment type="similarity">
    <text evidence="4">Belongs to the beta/gamma-crystallin family.</text>
</comment>
<organism>
    <name type="scientific">Canis lupus familiaris</name>
    <name type="common">Dog</name>
    <name type="synonym">Canis familiaris</name>
    <dbReference type="NCBI Taxonomy" id="9615"/>
    <lineage>
        <taxon>Eukaryota</taxon>
        <taxon>Metazoa</taxon>
        <taxon>Chordata</taxon>
        <taxon>Craniata</taxon>
        <taxon>Vertebrata</taxon>
        <taxon>Euteleostomi</taxon>
        <taxon>Mammalia</taxon>
        <taxon>Eutheria</taxon>
        <taxon>Laurasiatheria</taxon>
        <taxon>Carnivora</taxon>
        <taxon>Caniformia</taxon>
        <taxon>Canidae</taxon>
        <taxon>Canis</taxon>
    </lineage>
</organism>
<protein>
    <recommendedName>
        <fullName>Gamma-crystallin S</fullName>
    </recommendedName>
    <alternativeName>
        <fullName>Beta-crystallin S</fullName>
    </alternativeName>
    <alternativeName>
        <fullName>Gamma-S-crystallin</fullName>
    </alternativeName>
</protein>
<accession>A2IBY7</accession>
<dbReference type="EMBL" id="EF191196">
    <property type="protein sequence ID" value="ABM67546.1"/>
    <property type="molecule type" value="mRNA"/>
</dbReference>
<dbReference type="RefSeq" id="NP_001074370.1">
    <property type="nucleotide sequence ID" value="NM_001080901.2"/>
</dbReference>
<dbReference type="SMR" id="A2IBY7"/>
<dbReference type="FunCoup" id="A2IBY7">
    <property type="interactions" value="34"/>
</dbReference>
<dbReference type="STRING" id="9615.ENSCAFP00000041418"/>
<dbReference type="PaxDb" id="9612-ENSCAFP00000019924"/>
<dbReference type="Ensembl" id="ENSCAFT00000045202.4">
    <property type="protein sequence ID" value="ENSCAFP00000041418.1"/>
    <property type="gene ID" value="ENSCAFG00000013524.6"/>
</dbReference>
<dbReference type="Ensembl" id="ENSCAFT00030038824.1">
    <property type="protein sequence ID" value="ENSCAFP00030033858.1"/>
    <property type="gene ID" value="ENSCAFG00030021133.1"/>
</dbReference>
<dbReference type="Ensembl" id="ENSCAFT00040030134.1">
    <property type="protein sequence ID" value="ENSCAFP00040026185.1"/>
    <property type="gene ID" value="ENSCAFG00040016307.1"/>
</dbReference>
<dbReference type="Ensembl" id="ENSCAFT00845035521.1">
    <property type="protein sequence ID" value="ENSCAFP00845027790.1"/>
    <property type="gene ID" value="ENSCAFG00845020139.1"/>
</dbReference>
<dbReference type="GeneID" id="607506"/>
<dbReference type="KEGG" id="cfa:607506"/>
<dbReference type="CTD" id="1427"/>
<dbReference type="VEuPathDB" id="HostDB:ENSCAFG00845020139"/>
<dbReference type="VGNC" id="VGNC:39646">
    <property type="gene designation" value="CRYGS"/>
</dbReference>
<dbReference type="eggNOG" id="ENOG502QQAM">
    <property type="taxonomic scope" value="Eukaryota"/>
</dbReference>
<dbReference type="GeneTree" id="ENSGT00940000160342"/>
<dbReference type="HOGENOM" id="CLU_081883_1_1_1"/>
<dbReference type="InParanoid" id="A2IBY7"/>
<dbReference type="OrthoDB" id="8407241at2759"/>
<dbReference type="Proteomes" id="UP000002254">
    <property type="component" value="Chromosome 34"/>
</dbReference>
<dbReference type="Proteomes" id="UP000694429">
    <property type="component" value="Chromosome 34"/>
</dbReference>
<dbReference type="Proteomes" id="UP000694542">
    <property type="component" value="Chromosome 34"/>
</dbReference>
<dbReference type="Proteomes" id="UP000805418">
    <property type="component" value="Chromosome 34"/>
</dbReference>
<dbReference type="Bgee" id="ENSCAFG00000013524">
    <property type="expression patterns" value="Expressed in retina and 49 other cell types or tissues"/>
</dbReference>
<dbReference type="GO" id="GO:0005212">
    <property type="term" value="F:structural constituent of eye lens"/>
    <property type="evidence" value="ECO:0000318"/>
    <property type="project" value="GO_Central"/>
</dbReference>
<dbReference type="GO" id="GO:0002088">
    <property type="term" value="P:lens development in camera-type eye"/>
    <property type="evidence" value="ECO:0000318"/>
    <property type="project" value="GO_Central"/>
</dbReference>
<dbReference type="GO" id="GO:0002009">
    <property type="term" value="P:morphogenesis of an epithelium"/>
    <property type="evidence" value="ECO:0007669"/>
    <property type="project" value="Ensembl"/>
</dbReference>
<dbReference type="GO" id="GO:0007601">
    <property type="term" value="P:visual perception"/>
    <property type="evidence" value="ECO:0000318"/>
    <property type="project" value="GO_Central"/>
</dbReference>
<dbReference type="FunFam" id="2.60.20.10:FF:000001">
    <property type="entry name" value="Crystallin gamma S"/>
    <property type="match status" value="1"/>
</dbReference>
<dbReference type="FunFam" id="2.60.20.10:FF:000003">
    <property type="entry name" value="Crystallin gamma S"/>
    <property type="match status" value="1"/>
</dbReference>
<dbReference type="Gene3D" id="2.60.20.10">
    <property type="entry name" value="Crystallins"/>
    <property type="match status" value="2"/>
</dbReference>
<dbReference type="InterPro" id="IPR050252">
    <property type="entry name" value="Beta/Gamma-Crystallin"/>
</dbReference>
<dbReference type="InterPro" id="IPR001064">
    <property type="entry name" value="Beta/gamma_crystallin"/>
</dbReference>
<dbReference type="InterPro" id="IPR011024">
    <property type="entry name" value="G_crystallin-like"/>
</dbReference>
<dbReference type="PANTHER" id="PTHR11818">
    <property type="entry name" value="BETA/GAMMA CRYSTALLIN"/>
    <property type="match status" value="1"/>
</dbReference>
<dbReference type="PANTHER" id="PTHR11818:SF6">
    <property type="entry name" value="GAMMA-CRYSTALLIN S"/>
    <property type="match status" value="1"/>
</dbReference>
<dbReference type="Pfam" id="PF00030">
    <property type="entry name" value="Crystall"/>
    <property type="match status" value="2"/>
</dbReference>
<dbReference type="PRINTS" id="PR01367">
    <property type="entry name" value="BGCRYSTALLIN"/>
</dbReference>
<dbReference type="SMART" id="SM00247">
    <property type="entry name" value="XTALbg"/>
    <property type="match status" value="2"/>
</dbReference>
<dbReference type="SUPFAM" id="SSF49695">
    <property type="entry name" value="gamma-Crystallin-like"/>
    <property type="match status" value="1"/>
</dbReference>
<dbReference type="PROSITE" id="PS50915">
    <property type="entry name" value="CRYSTALLIN_BETA_GAMMA"/>
    <property type="match status" value="4"/>
</dbReference>
<feature type="initiator methionine" description="Removed" evidence="2">
    <location>
        <position position="1"/>
    </location>
</feature>
<feature type="chain" id="PRO_0000289576" description="Gamma-crystallin S">
    <location>
        <begin position="2"/>
        <end position="178"/>
    </location>
</feature>
<feature type="domain" description="Beta/gamma crystallin 'Greek key' 1" evidence="3">
    <location>
        <begin position="6"/>
        <end position="44"/>
    </location>
</feature>
<feature type="domain" description="Beta/gamma crystallin 'Greek key' 2" evidence="3">
    <location>
        <begin position="45"/>
        <end position="87"/>
    </location>
</feature>
<feature type="domain" description="Beta/gamma crystallin 'Greek key' 3" evidence="3">
    <location>
        <begin position="94"/>
        <end position="134"/>
    </location>
</feature>
<feature type="domain" description="Beta/gamma crystallin 'Greek key' 4" evidence="3">
    <location>
        <begin position="135"/>
        <end position="177"/>
    </location>
</feature>
<feature type="region of interest" description="N-terminal arm">
    <location>
        <begin position="2"/>
        <end position="5"/>
    </location>
</feature>
<feature type="region of interest" description="Connecting peptide">
    <location>
        <begin position="88"/>
        <end position="93"/>
    </location>
</feature>
<feature type="modified residue" description="N-acetylserine" evidence="2">
    <location>
        <position position="2"/>
    </location>
</feature>
<keyword id="KW-0007">Acetylation</keyword>
<keyword id="KW-0273">Eye lens protein</keyword>
<keyword id="KW-1185">Reference proteome</keyword>
<keyword id="KW-0677">Repeat</keyword>